<keyword id="KW-0175">Coiled coil</keyword>
<keyword id="KW-0931">ER-Golgi transport</keyword>
<keyword id="KW-0333">Golgi apparatus</keyword>
<keyword id="KW-1185">Reference proteome</keyword>
<keyword id="KW-0813">Transport</keyword>
<proteinExistence type="evidence at transcript level"/>
<accession>O42903</accession>
<accession>P78915</accession>
<accession>Q1L841</accession>
<name>YBAC_SCHPO</name>
<gene>
    <name type="ORF">SPBC119.12</name>
</gene>
<protein>
    <recommendedName>
        <fullName>GRIP domain-containing protein C119.12</fullName>
    </recommendedName>
</protein>
<comment type="subcellular location">
    <subcellularLocation>
        <location evidence="1">Golgi apparatus lumen</location>
    </subcellularLocation>
</comment>
<reference key="1">
    <citation type="journal article" date="2002" name="Nature">
        <title>The genome sequence of Schizosaccharomyces pombe.</title>
        <authorList>
            <person name="Wood V."/>
            <person name="Gwilliam R."/>
            <person name="Rajandream M.A."/>
            <person name="Lyne M.H."/>
            <person name="Lyne R."/>
            <person name="Stewart A."/>
            <person name="Sgouros J.G."/>
            <person name="Peat N."/>
            <person name="Hayles J."/>
            <person name="Baker S.G."/>
            <person name="Basham D."/>
            <person name="Bowman S."/>
            <person name="Brooks K."/>
            <person name="Brown D."/>
            <person name="Brown S."/>
            <person name="Chillingworth T."/>
            <person name="Churcher C.M."/>
            <person name="Collins M."/>
            <person name="Connor R."/>
            <person name="Cronin A."/>
            <person name="Davis P."/>
            <person name="Feltwell T."/>
            <person name="Fraser A."/>
            <person name="Gentles S."/>
            <person name="Goble A."/>
            <person name="Hamlin N."/>
            <person name="Harris D.E."/>
            <person name="Hidalgo J."/>
            <person name="Hodgson G."/>
            <person name="Holroyd S."/>
            <person name="Hornsby T."/>
            <person name="Howarth S."/>
            <person name="Huckle E.J."/>
            <person name="Hunt S."/>
            <person name="Jagels K."/>
            <person name="James K.D."/>
            <person name="Jones L."/>
            <person name="Jones M."/>
            <person name="Leather S."/>
            <person name="McDonald S."/>
            <person name="McLean J."/>
            <person name="Mooney P."/>
            <person name="Moule S."/>
            <person name="Mungall K.L."/>
            <person name="Murphy L.D."/>
            <person name="Niblett D."/>
            <person name="Odell C."/>
            <person name="Oliver K."/>
            <person name="O'Neil S."/>
            <person name="Pearson D."/>
            <person name="Quail M.A."/>
            <person name="Rabbinowitsch E."/>
            <person name="Rutherford K.M."/>
            <person name="Rutter S."/>
            <person name="Saunders D."/>
            <person name="Seeger K."/>
            <person name="Sharp S."/>
            <person name="Skelton J."/>
            <person name="Simmonds M.N."/>
            <person name="Squares R."/>
            <person name="Squares S."/>
            <person name="Stevens K."/>
            <person name="Taylor K."/>
            <person name="Taylor R.G."/>
            <person name="Tivey A."/>
            <person name="Walsh S.V."/>
            <person name="Warren T."/>
            <person name="Whitehead S."/>
            <person name="Woodward J.R."/>
            <person name="Volckaert G."/>
            <person name="Aert R."/>
            <person name="Robben J."/>
            <person name="Grymonprez B."/>
            <person name="Weltjens I."/>
            <person name="Vanstreels E."/>
            <person name="Rieger M."/>
            <person name="Schaefer M."/>
            <person name="Mueller-Auer S."/>
            <person name="Gabel C."/>
            <person name="Fuchs M."/>
            <person name="Duesterhoeft A."/>
            <person name="Fritzc C."/>
            <person name="Holzer E."/>
            <person name="Moestl D."/>
            <person name="Hilbert H."/>
            <person name="Borzym K."/>
            <person name="Langer I."/>
            <person name="Beck A."/>
            <person name="Lehrach H."/>
            <person name="Reinhardt R."/>
            <person name="Pohl T.M."/>
            <person name="Eger P."/>
            <person name="Zimmermann W."/>
            <person name="Wedler H."/>
            <person name="Wambutt R."/>
            <person name="Purnelle B."/>
            <person name="Goffeau A."/>
            <person name="Cadieu E."/>
            <person name="Dreano S."/>
            <person name="Gloux S."/>
            <person name="Lelaure V."/>
            <person name="Mottier S."/>
            <person name="Galibert F."/>
            <person name="Aves S.J."/>
            <person name="Xiang Z."/>
            <person name="Hunt C."/>
            <person name="Moore K."/>
            <person name="Hurst S.M."/>
            <person name="Lucas M."/>
            <person name="Rochet M."/>
            <person name="Gaillardin C."/>
            <person name="Tallada V.A."/>
            <person name="Garzon A."/>
            <person name="Thode G."/>
            <person name="Daga R.R."/>
            <person name="Cruzado L."/>
            <person name="Jimenez J."/>
            <person name="Sanchez M."/>
            <person name="del Rey F."/>
            <person name="Benito J."/>
            <person name="Dominguez A."/>
            <person name="Revuelta J.L."/>
            <person name="Moreno S."/>
            <person name="Armstrong J."/>
            <person name="Forsburg S.L."/>
            <person name="Cerutti L."/>
            <person name="Lowe T."/>
            <person name="McCombie W.R."/>
            <person name="Paulsen I."/>
            <person name="Potashkin J."/>
            <person name="Shpakovski G.V."/>
            <person name="Ussery D."/>
            <person name="Barrell B.G."/>
            <person name="Nurse P."/>
        </authorList>
    </citation>
    <scope>NUCLEOTIDE SEQUENCE [LARGE SCALE GENOMIC DNA]</scope>
    <source>
        <strain>972 / ATCC 24843</strain>
    </source>
</reference>
<reference key="2">
    <citation type="journal article" date="1997" name="DNA Res.">
        <title>Identification of open reading frames in Schizosaccharomyces pombe cDNAs.</title>
        <authorList>
            <person name="Yoshioka S."/>
            <person name="Kato K."/>
            <person name="Nakai K."/>
            <person name="Okayama H."/>
            <person name="Nojima H."/>
        </authorList>
    </citation>
    <scope>NUCLEOTIDE SEQUENCE [LARGE SCALE MRNA] OF 51-390</scope>
    <source>
        <strain>PR745</strain>
    </source>
</reference>
<feature type="chain" id="PRO_0000372423" description="GRIP domain-containing protein C119.12">
    <location>
        <begin position="1"/>
        <end position="401"/>
    </location>
</feature>
<feature type="domain" description="GRIP" evidence="3">
    <location>
        <begin position="315"/>
        <end position="366"/>
    </location>
</feature>
<feature type="coiled-coil region" evidence="2">
    <location>
        <begin position="7"/>
        <end position="296"/>
    </location>
</feature>
<feature type="sequence conflict" description="In Ref. 2; BAA13927." evidence="4" ref="2">
    <original>ESFKK</original>
    <variation>RIFHE</variation>
    <location>
        <begin position="53"/>
        <end position="57"/>
    </location>
</feature>
<feature type="sequence conflict" description="In Ref. 2; BAA13927." evidence="4" ref="2">
    <original>N</original>
    <variation>K</variation>
    <location>
        <position position="316"/>
    </location>
</feature>
<feature type="sequence conflict" description="In Ref. 2; BAA13927." evidence="4" ref="2">
    <original>IDK</original>
    <variation>LDN</variation>
    <location>
        <begin position="320"/>
        <end position="322"/>
    </location>
</feature>
<feature type="sequence conflict" description="In Ref. 2; BAA13927." evidence="4" ref="2">
    <original>E</original>
    <variation>D</variation>
    <location>
        <position position="344"/>
    </location>
</feature>
<feature type="sequence conflict" description="In Ref. 2; BAA13927." evidence="4" ref="2">
    <original>ISSV</original>
    <variation>LPSE</variation>
    <location>
        <begin position="349"/>
        <end position="352"/>
    </location>
</feature>
<feature type="sequence conflict" description="In Ref. 2; BAA13927." evidence="4" ref="2">
    <original>TGLQRPGSSVNNWSIPHSASSNSLFSDH</original>
    <variation>PGTSTSWFLCK</variation>
    <location>
        <begin position="363"/>
        <end position="390"/>
    </location>
</feature>
<evidence type="ECO:0000250" key="1"/>
<evidence type="ECO:0000255" key="2"/>
<evidence type="ECO:0000255" key="3">
    <source>
        <dbReference type="PROSITE-ProRule" id="PRU00250"/>
    </source>
</evidence>
<evidence type="ECO:0000305" key="4"/>
<sequence length="401" mass="46153">MAENAGNETKLVENENLQEDLSRLNLEDEKNELKLNEKGGVLKENDEHLECSESFKKLAEKEEAYQTLKNSYNSLKQQHSNLLGKVSGIKSTLGERLKKDSQELAQNRKRIQELEKSLGDAEEALKLSNEETVTLTAQVESLTQDITDLRQQNASLVEENQLLSTQSKQWERRARDEHEMQESLAVRLADCEEQLARETERQEQYEVEIQRHLTNQHQLEIELESTKASHTENLGELTRNWQKAMDDVTEKFASKSKEYEDLQNELDATQKRLSRVSDLEHEVKEKTLLIGKLQHEAVVLNEHLTKALCMLKDGNNAEKIDKQLISNLFVSFLTLPRADTKRFEILQLISSVLDWNDTQREQTGLQRPGSSVNNWSIPHSASSNSLFSDHSFSKRRSFHDS</sequence>
<organism>
    <name type="scientific">Schizosaccharomyces pombe (strain 972 / ATCC 24843)</name>
    <name type="common">Fission yeast</name>
    <dbReference type="NCBI Taxonomy" id="284812"/>
    <lineage>
        <taxon>Eukaryota</taxon>
        <taxon>Fungi</taxon>
        <taxon>Dikarya</taxon>
        <taxon>Ascomycota</taxon>
        <taxon>Taphrinomycotina</taxon>
        <taxon>Schizosaccharomycetes</taxon>
        <taxon>Schizosaccharomycetales</taxon>
        <taxon>Schizosaccharomycetaceae</taxon>
        <taxon>Schizosaccharomyces</taxon>
    </lineage>
</organism>
<dbReference type="EMBL" id="CU329671">
    <property type="protein sequence ID" value="CAA17927.1"/>
    <property type="molecule type" value="Genomic_DNA"/>
</dbReference>
<dbReference type="EMBL" id="D89266">
    <property type="protein sequence ID" value="BAA13927.1"/>
    <property type="molecule type" value="mRNA"/>
</dbReference>
<dbReference type="PIR" id="T39310">
    <property type="entry name" value="T39310"/>
</dbReference>
<dbReference type="PIR" id="T43194">
    <property type="entry name" value="T43194"/>
</dbReference>
<dbReference type="SMR" id="O42903"/>
<dbReference type="BioGRID" id="276599">
    <property type="interactions" value="41"/>
</dbReference>
<dbReference type="FunCoup" id="O42903">
    <property type="interactions" value="120"/>
</dbReference>
<dbReference type="STRING" id="284812.O42903"/>
<dbReference type="iPTMnet" id="O42903"/>
<dbReference type="PaxDb" id="4896-SPBC119.12.1"/>
<dbReference type="EnsemblFungi" id="SPBC119.12.1">
    <property type="protein sequence ID" value="SPBC119.12.1:pep"/>
    <property type="gene ID" value="SPBC119.12"/>
</dbReference>
<dbReference type="KEGG" id="spo:2540061"/>
<dbReference type="PomBase" id="SPBC119.12"/>
<dbReference type="VEuPathDB" id="FungiDB:SPBC119.12"/>
<dbReference type="eggNOG" id="ENOG502RYXN">
    <property type="taxonomic scope" value="Eukaryota"/>
</dbReference>
<dbReference type="HOGENOM" id="CLU_020680_3_0_1"/>
<dbReference type="InParanoid" id="O42903"/>
<dbReference type="OMA" id="QAMHNWE"/>
<dbReference type="PhylomeDB" id="O42903"/>
<dbReference type="PRO" id="PR:O42903"/>
<dbReference type="Proteomes" id="UP000002485">
    <property type="component" value="Chromosome II"/>
</dbReference>
<dbReference type="GO" id="GO:0005794">
    <property type="term" value="C:Golgi apparatus"/>
    <property type="evidence" value="ECO:0000318"/>
    <property type="project" value="GO_Central"/>
</dbReference>
<dbReference type="GO" id="GO:0005796">
    <property type="term" value="C:Golgi lumen"/>
    <property type="evidence" value="ECO:0007669"/>
    <property type="project" value="UniProtKB-SubCell"/>
</dbReference>
<dbReference type="GO" id="GO:0031267">
    <property type="term" value="F:small GTPase binding"/>
    <property type="evidence" value="ECO:0000318"/>
    <property type="project" value="GO_Central"/>
</dbReference>
<dbReference type="GO" id="GO:0006888">
    <property type="term" value="P:endoplasmic reticulum to Golgi vesicle-mediated transport"/>
    <property type="evidence" value="ECO:0000318"/>
    <property type="project" value="GO_Central"/>
</dbReference>
<dbReference type="GO" id="GO:0007030">
    <property type="term" value="P:Golgi organization"/>
    <property type="evidence" value="ECO:0000318"/>
    <property type="project" value="GO_Central"/>
</dbReference>
<dbReference type="InterPro" id="IPR019459">
    <property type="entry name" value="GRAB"/>
</dbReference>
<dbReference type="InterPro" id="IPR000237">
    <property type="entry name" value="GRIP_dom"/>
</dbReference>
<dbReference type="PANTHER" id="PTHR18921">
    <property type="entry name" value="MYOSIN HEAVY CHAIN - RELATED"/>
    <property type="match status" value="1"/>
</dbReference>
<dbReference type="PANTHER" id="PTHR18921:SF2">
    <property type="entry name" value="THYROID RECEPTOR-INTERACTING PROTEIN 11"/>
    <property type="match status" value="1"/>
</dbReference>
<dbReference type="Pfam" id="PF10375">
    <property type="entry name" value="GRAB"/>
    <property type="match status" value="1"/>
</dbReference>
<dbReference type="SUPFAM" id="SSF57997">
    <property type="entry name" value="Tropomyosin"/>
    <property type="match status" value="1"/>
</dbReference>
<dbReference type="PROSITE" id="PS50913">
    <property type="entry name" value="GRIP"/>
    <property type="match status" value="1"/>
</dbReference>